<keyword id="KW-0031">Aminopeptidase</keyword>
<keyword id="KW-0963">Cytoplasm</keyword>
<keyword id="KW-0378">Hydrolase</keyword>
<keyword id="KW-0464">Manganese</keyword>
<keyword id="KW-0479">Metal-binding</keyword>
<keyword id="KW-0645">Protease</keyword>
<organism>
    <name type="scientific">Burkholderia ambifaria (strain MC40-6)</name>
    <dbReference type="NCBI Taxonomy" id="398577"/>
    <lineage>
        <taxon>Bacteria</taxon>
        <taxon>Pseudomonadati</taxon>
        <taxon>Pseudomonadota</taxon>
        <taxon>Betaproteobacteria</taxon>
        <taxon>Burkholderiales</taxon>
        <taxon>Burkholderiaceae</taxon>
        <taxon>Burkholderia</taxon>
        <taxon>Burkholderia cepacia complex</taxon>
    </lineage>
</organism>
<reference key="1">
    <citation type="submission" date="2008-04" db="EMBL/GenBank/DDBJ databases">
        <title>Complete sequence of chromosome 1 of Burkholderia ambifaria MC40-6.</title>
        <authorList>
            <person name="Copeland A."/>
            <person name="Lucas S."/>
            <person name="Lapidus A."/>
            <person name="Glavina del Rio T."/>
            <person name="Dalin E."/>
            <person name="Tice H."/>
            <person name="Pitluck S."/>
            <person name="Chain P."/>
            <person name="Malfatti S."/>
            <person name="Shin M."/>
            <person name="Vergez L."/>
            <person name="Lang D."/>
            <person name="Schmutz J."/>
            <person name="Larimer F."/>
            <person name="Land M."/>
            <person name="Hauser L."/>
            <person name="Kyrpides N."/>
            <person name="Lykidis A."/>
            <person name="Ramette A."/>
            <person name="Konstantinidis K."/>
            <person name="Tiedje J."/>
            <person name="Richardson P."/>
        </authorList>
    </citation>
    <scope>NUCLEOTIDE SEQUENCE [LARGE SCALE GENOMIC DNA]</scope>
    <source>
        <strain>MC40-6</strain>
    </source>
</reference>
<dbReference type="EC" id="3.4.11.1" evidence="1"/>
<dbReference type="EC" id="3.4.11.10" evidence="1"/>
<dbReference type="EMBL" id="CP001025">
    <property type="protein sequence ID" value="ACB64861.1"/>
    <property type="molecule type" value="Genomic_DNA"/>
</dbReference>
<dbReference type="RefSeq" id="WP_012364483.1">
    <property type="nucleotide sequence ID" value="NC_010551.1"/>
</dbReference>
<dbReference type="SMR" id="B1YUW5"/>
<dbReference type="MEROPS" id="M17.003"/>
<dbReference type="KEGG" id="bac:BamMC406_2383"/>
<dbReference type="HOGENOM" id="CLU_013734_2_2_4"/>
<dbReference type="OrthoDB" id="9809354at2"/>
<dbReference type="Proteomes" id="UP000001680">
    <property type="component" value="Chromosome 1"/>
</dbReference>
<dbReference type="GO" id="GO:0005737">
    <property type="term" value="C:cytoplasm"/>
    <property type="evidence" value="ECO:0007669"/>
    <property type="project" value="UniProtKB-SubCell"/>
</dbReference>
<dbReference type="GO" id="GO:0030145">
    <property type="term" value="F:manganese ion binding"/>
    <property type="evidence" value="ECO:0007669"/>
    <property type="project" value="UniProtKB-UniRule"/>
</dbReference>
<dbReference type="GO" id="GO:0070006">
    <property type="term" value="F:metalloaminopeptidase activity"/>
    <property type="evidence" value="ECO:0007669"/>
    <property type="project" value="InterPro"/>
</dbReference>
<dbReference type="GO" id="GO:0006508">
    <property type="term" value="P:proteolysis"/>
    <property type="evidence" value="ECO:0007669"/>
    <property type="project" value="UniProtKB-KW"/>
</dbReference>
<dbReference type="CDD" id="cd00433">
    <property type="entry name" value="Peptidase_M17"/>
    <property type="match status" value="1"/>
</dbReference>
<dbReference type="FunFam" id="3.40.630.10:FF:000004">
    <property type="entry name" value="Probable cytosol aminopeptidase"/>
    <property type="match status" value="1"/>
</dbReference>
<dbReference type="Gene3D" id="3.40.220.10">
    <property type="entry name" value="Leucine Aminopeptidase, subunit E, domain 1"/>
    <property type="match status" value="1"/>
</dbReference>
<dbReference type="Gene3D" id="3.40.630.10">
    <property type="entry name" value="Zn peptidases"/>
    <property type="match status" value="1"/>
</dbReference>
<dbReference type="HAMAP" id="MF_00181">
    <property type="entry name" value="Cytosol_peptidase_M17"/>
    <property type="match status" value="1"/>
</dbReference>
<dbReference type="InterPro" id="IPR011356">
    <property type="entry name" value="Leucine_aapep/pepB"/>
</dbReference>
<dbReference type="InterPro" id="IPR043472">
    <property type="entry name" value="Macro_dom-like"/>
</dbReference>
<dbReference type="InterPro" id="IPR000819">
    <property type="entry name" value="Peptidase_M17_C"/>
</dbReference>
<dbReference type="InterPro" id="IPR023042">
    <property type="entry name" value="Peptidase_M17_leu_NH2_pept"/>
</dbReference>
<dbReference type="InterPro" id="IPR008283">
    <property type="entry name" value="Peptidase_M17_N"/>
</dbReference>
<dbReference type="NCBIfam" id="NF002073">
    <property type="entry name" value="PRK00913.1-2"/>
    <property type="match status" value="1"/>
</dbReference>
<dbReference type="NCBIfam" id="NF002074">
    <property type="entry name" value="PRK00913.1-4"/>
    <property type="match status" value="1"/>
</dbReference>
<dbReference type="NCBIfam" id="NF002077">
    <property type="entry name" value="PRK00913.2-4"/>
    <property type="match status" value="1"/>
</dbReference>
<dbReference type="PANTHER" id="PTHR11963:SF23">
    <property type="entry name" value="CYTOSOL AMINOPEPTIDASE"/>
    <property type="match status" value="1"/>
</dbReference>
<dbReference type="PANTHER" id="PTHR11963">
    <property type="entry name" value="LEUCINE AMINOPEPTIDASE-RELATED"/>
    <property type="match status" value="1"/>
</dbReference>
<dbReference type="Pfam" id="PF00883">
    <property type="entry name" value="Peptidase_M17"/>
    <property type="match status" value="1"/>
</dbReference>
<dbReference type="Pfam" id="PF02789">
    <property type="entry name" value="Peptidase_M17_N"/>
    <property type="match status" value="1"/>
</dbReference>
<dbReference type="PRINTS" id="PR00481">
    <property type="entry name" value="LAMNOPPTDASE"/>
</dbReference>
<dbReference type="SUPFAM" id="SSF52949">
    <property type="entry name" value="Macro domain-like"/>
    <property type="match status" value="1"/>
</dbReference>
<dbReference type="SUPFAM" id="SSF53187">
    <property type="entry name" value="Zn-dependent exopeptidases"/>
    <property type="match status" value="1"/>
</dbReference>
<dbReference type="PROSITE" id="PS00631">
    <property type="entry name" value="CYTOSOL_AP"/>
    <property type="match status" value="1"/>
</dbReference>
<proteinExistence type="inferred from homology"/>
<feature type="chain" id="PRO_1000098306" description="Probable cytosol aminopeptidase">
    <location>
        <begin position="1"/>
        <end position="503"/>
    </location>
</feature>
<feature type="active site" evidence="1">
    <location>
        <position position="286"/>
    </location>
</feature>
<feature type="active site" evidence="1">
    <location>
        <position position="360"/>
    </location>
</feature>
<feature type="binding site" evidence="1">
    <location>
        <position position="274"/>
    </location>
    <ligand>
        <name>Mn(2+)</name>
        <dbReference type="ChEBI" id="CHEBI:29035"/>
        <label>2</label>
    </ligand>
</feature>
<feature type="binding site" evidence="1">
    <location>
        <position position="279"/>
    </location>
    <ligand>
        <name>Mn(2+)</name>
        <dbReference type="ChEBI" id="CHEBI:29035"/>
        <label>1</label>
    </ligand>
</feature>
<feature type="binding site" evidence="1">
    <location>
        <position position="279"/>
    </location>
    <ligand>
        <name>Mn(2+)</name>
        <dbReference type="ChEBI" id="CHEBI:29035"/>
        <label>2</label>
    </ligand>
</feature>
<feature type="binding site" evidence="1">
    <location>
        <position position="297"/>
    </location>
    <ligand>
        <name>Mn(2+)</name>
        <dbReference type="ChEBI" id="CHEBI:29035"/>
        <label>2</label>
    </ligand>
</feature>
<feature type="binding site" evidence="1">
    <location>
        <position position="356"/>
    </location>
    <ligand>
        <name>Mn(2+)</name>
        <dbReference type="ChEBI" id="CHEBI:29035"/>
        <label>1</label>
    </ligand>
</feature>
<feature type="binding site" evidence="1">
    <location>
        <position position="358"/>
    </location>
    <ligand>
        <name>Mn(2+)</name>
        <dbReference type="ChEBI" id="CHEBI:29035"/>
        <label>1</label>
    </ligand>
</feature>
<feature type="binding site" evidence="1">
    <location>
        <position position="358"/>
    </location>
    <ligand>
        <name>Mn(2+)</name>
        <dbReference type="ChEBI" id="CHEBI:29035"/>
        <label>2</label>
    </ligand>
</feature>
<evidence type="ECO:0000255" key="1">
    <source>
        <dbReference type="HAMAP-Rule" id="MF_00181"/>
    </source>
</evidence>
<sequence length="503" mass="53065">MDFSIKGCDWSKGEAKGFLTGKSDCIVLGIFEAQTLSGAALDIDTATKGLISRVVKAGDMDGKRGKTLFLHEVSGIGASRVLLVGLGKQDAFNQKAYTDAVTAAWRALLSTKIVQVTFTLAQLPVDERSSDWGVRAAILALRNETYRFTQMKSKPEPASHTLKRVVFSVDPADEKAAKLAVKQAVALANGMDLTRDLGNLPGNVCTPTYLGNTAKKIAKDWGLKAEVLGLKQIQALNMGSFLSVARASVEPPQFIVLHYQGAAAKAAPVVLVGKGITFDTGGISLKPGEAMDEMKYDMCGAGSVLGTMRAVAEMGLKINVVAIVPTCENMPGGNATKPGDIVTSMKGLTIEVLNTDAEGRLILCDALTYAERFKPAAVIDVATLTGACVIALGAHNSGLFSKDDALAGELLDASREANDPAWRMPLDDEYQDQLKSNFADIANIGGRPAGAVTAACFLSRFTDSYPWAHLDIAGTAWKGGAAKGATGRPVPLLAQFLIDRAGQ</sequence>
<comment type="function">
    <text evidence="1">Presumably involved in the processing and regular turnover of intracellular proteins. Catalyzes the removal of unsubstituted N-terminal amino acids from various peptides.</text>
</comment>
<comment type="catalytic activity">
    <reaction evidence="1">
        <text>Release of an N-terminal amino acid, Xaa-|-Yaa-, in which Xaa is preferably Leu, but may be other amino acids including Pro although not Arg or Lys, and Yaa may be Pro. Amino acid amides and methyl esters are also readily hydrolyzed, but rates on arylamides are exceedingly low.</text>
        <dbReference type="EC" id="3.4.11.1"/>
    </reaction>
</comment>
<comment type="catalytic activity">
    <reaction evidence="1">
        <text>Release of an N-terminal amino acid, preferentially leucine, but not glutamic or aspartic acids.</text>
        <dbReference type="EC" id="3.4.11.10"/>
    </reaction>
</comment>
<comment type="cofactor">
    <cofactor evidence="1">
        <name>Mn(2+)</name>
        <dbReference type="ChEBI" id="CHEBI:29035"/>
    </cofactor>
    <text evidence="1">Binds 2 manganese ions per subunit.</text>
</comment>
<comment type="subcellular location">
    <subcellularLocation>
        <location evidence="1">Cytoplasm</location>
    </subcellularLocation>
</comment>
<comment type="similarity">
    <text evidence="1">Belongs to the peptidase M17 family.</text>
</comment>
<accession>B1YUW5</accession>
<name>AMPA_BURA4</name>
<protein>
    <recommendedName>
        <fullName evidence="1">Probable cytosol aminopeptidase</fullName>
        <ecNumber evidence="1">3.4.11.1</ecNumber>
    </recommendedName>
    <alternativeName>
        <fullName evidence="1">Leucine aminopeptidase</fullName>
        <shortName evidence="1">LAP</shortName>
        <ecNumber evidence="1">3.4.11.10</ecNumber>
    </alternativeName>
    <alternativeName>
        <fullName evidence="1">Leucyl aminopeptidase</fullName>
    </alternativeName>
</protein>
<gene>
    <name evidence="1" type="primary">pepA</name>
    <name type="ordered locus">BamMC406_2383</name>
</gene>